<proteinExistence type="inferred from homology"/>
<feature type="chain" id="PRO_0000154211" description="Indole-3-glycerol phosphate synthase">
    <location>
        <begin position="1"/>
        <end position="255"/>
    </location>
</feature>
<sequence>MLNKIIETKKEEIQNLQLPEQQNVAKRSFLDALSNPNRELALIAEVKKASPSKGLIKENFQPVEIAKAYEKGKADALSVLTDQHYFQGHRTFLSDIKQHVSVPVLRKDFIIDSIQVEESARIGADAILLIGEALEPLKLQELYLQAAEKELDCLVEVHSLETLEKLLAVFTPKIIGINNRNLHTFETSLQQTKEIAKHVPKDQLLVSESGIYLYDDVSYVKEAGAKAILVGESLMRQDNQTKAIEKLFGESEYAH</sequence>
<keyword id="KW-0028">Amino-acid biosynthesis</keyword>
<keyword id="KW-0057">Aromatic amino acid biosynthesis</keyword>
<keyword id="KW-0210">Decarboxylase</keyword>
<keyword id="KW-0456">Lyase</keyword>
<keyword id="KW-1185">Reference proteome</keyword>
<keyword id="KW-0822">Tryptophan biosynthesis</keyword>
<protein>
    <recommendedName>
        <fullName>Indole-3-glycerol phosphate synthase</fullName>
        <shortName>IGPS</shortName>
        <ecNumber>4.1.1.48</ecNumber>
    </recommendedName>
</protein>
<reference key="1">
    <citation type="submission" date="1996-09" db="EMBL/GenBank/DDBJ databases">
        <authorList>
            <person name="Jablonski L.M."/>
            <person name="Vary P.S."/>
            <person name="Hudspeth D.S."/>
        </authorList>
    </citation>
    <scope>NUCLEOTIDE SEQUENCE [GENOMIC DNA]</scope>
</reference>
<reference key="2">
    <citation type="journal article" date="2011" name="J. Bacteriol.">
        <title>Genome sequences of the biotechnologically important Bacillus megaterium strains QM B1551 and DSM319.</title>
        <authorList>
            <person name="Eppinger M."/>
            <person name="Bunk B."/>
            <person name="Johns M.A."/>
            <person name="Edirisinghe J.N."/>
            <person name="Kutumbaka K.K."/>
            <person name="Koenig S.S."/>
            <person name="Creasy H.H."/>
            <person name="Rosovitz M.J."/>
            <person name="Riley D.R."/>
            <person name="Daugherty S."/>
            <person name="Martin M."/>
            <person name="Elbourne L.D."/>
            <person name="Paulsen I."/>
            <person name="Biedendieck R."/>
            <person name="Braun C."/>
            <person name="Grayburn S."/>
            <person name="Dhingra S."/>
            <person name="Lukyanchuk V."/>
            <person name="Ball B."/>
            <person name="Ul-Qamar R."/>
            <person name="Seibel J."/>
            <person name="Bremer E."/>
            <person name="Jahn D."/>
            <person name="Ravel J."/>
            <person name="Vary P.S."/>
        </authorList>
    </citation>
    <scope>NUCLEOTIDE SEQUENCE [LARGE SCALE GENOMIC DNA]</scope>
    <source>
        <strain>ATCC 12872 / DSM 1804 / QMB1551</strain>
    </source>
</reference>
<name>TRPC_PRIM1</name>
<gene>
    <name type="primary">trpC</name>
    <name type="ordered locus">BMQ_4321</name>
</gene>
<dbReference type="EC" id="4.1.1.48"/>
<dbReference type="EMBL" id="U67986">
    <property type="protein sequence ID" value="AAB07592.1"/>
    <property type="molecule type" value="Genomic_DNA"/>
</dbReference>
<dbReference type="EMBL" id="CP001983">
    <property type="protein sequence ID" value="ADE71331.1"/>
    <property type="molecule type" value="Genomic_DNA"/>
</dbReference>
<dbReference type="RefSeq" id="WP_013059004.1">
    <property type="nucleotide sequence ID" value="NC_014019.1"/>
</dbReference>
<dbReference type="SMR" id="P70937"/>
<dbReference type="STRING" id="545693.BMQ_4321"/>
<dbReference type="KEGG" id="bmq:BMQ_4321"/>
<dbReference type="eggNOG" id="COG0134">
    <property type="taxonomic scope" value="Bacteria"/>
</dbReference>
<dbReference type="HOGENOM" id="CLU_034247_2_0_9"/>
<dbReference type="UniPathway" id="UPA00035">
    <property type="reaction ID" value="UER00043"/>
</dbReference>
<dbReference type="Proteomes" id="UP000000935">
    <property type="component" value="Chromosome"/>
</dbReference>
<dbReference type="GO" id="GO:0004425">
    <property type="term" value="F:indole-3-glycerol-phosphate synthase activity"/>
    <property type="evidence" value="ECO:0007669"/>
    <property type="project" value="UniProtKB-UniRule"/>
</dbReference>
<dbReference type="GO" id="GO:0004640">
    <property type="term" value="F:phosphoribosylanthranilate isomerase activity"/>
    <property type="evidence" value="ECO:0007669"/>
    <property type="project" value="TreeGrafter"/>
</dbReference>
<dbReference type="GO" id="GO:0000162">
    <property type="term" value="P:L-tryptophan biosynthetic process"/>
    <property type="evidence" value="ECO:0007669"/>
    <property type="project" value="UniProtKB-UniRule"/>
</dbReference>
<dbReference type="CDD" id="cd00331">
    <property type="entry name" value="IGPS"/>
    <property type="match status" value="1"/>
</dbReference>
<dbReference type="FunFam" id="3.20.20.70:FF:000024">
    <property type="entry name" value="Indole-3-glycerol phosphate synthase"/>
    <property type="match status" value="1"/>
</dbReference>
<dbReference type="Gene3D" id="3.20.20.70">
    <property type="entry name" value="Aldolase class I"/>
    <property type="match status" value="1"/>
</dbReference>
<dbReference type="HAMAP" id="MF_00134_B">
    <property type="entry name" value="IGPS_B"/>
    <property type="match status" value="1"/>
</dbReference>
<dbReference type="InterPro" id="IPR013785">
    <property type="entry name" value="Aldolase_TIM"/>
</dbReference>
<dbReference type="InterPro" id="IPR045186">
    <property type="entry name" value="Indole-3-glycerol_P_synth"/>
</dbReference>
<dbReference type="InterPro" id="IPR013798">
    <property type="entry name" value="Indole-3-glycerol_P_synth_dom"/>
</dbReference>
<dbReference type="InterPro" id="IPR001468">
    <property type="entry name" value="Indole-3-GlycerolPSynthase_CS"/>
</dbReference>
<dbReference type="InterPro" id="IPR011060">
    <property type="entry name" value="RibuloseP-bd_barrel"/>
</dbReference>
<dbReference type="NCBIfam" id="NF001375">
    <property type="entry name" value="PRK00278.2-2"/>
    <property type="match status" value="1"/>
</dbReference>
<dbReference type="NCBIfam" id="NF001377">
    <property type="entry name" value="PRK00278.2-4"/>
    <property type="match status" value="1"/>
</dbReference>
<dbReference type="PANTHER" id="PTHR22854:SF2">
    <property type="entry name" value="INDOLE-3-GLYCEROL-PHOSPHATE SYNTHASE"/>
    <property type="match status" value="1"/>
</dbReference>
<dbReference type="PANTHER" id="PTHR22854">
    <property type="entry name" value="TRYPTOPHAN BIOSYNTHESIS PROTEIN"/>
    <property type="match status" value="1"/>
</dbReference>
<dbReference type="Pfam" id="PF00218">
    <property type="entry name" value="IGPS"/>
    <property type="match status" value="1"/>
</dbReference>
<dbReference type="SUPFAM" id="SSF51366">
    <property type="entry name" value="Ribulose-phoshate binding barrel"/>
    <property type="match status" value="1"/>
</dbReference>
<dbReference type="PROSITE" id="PS00614">
    <property type="entry name" value="IGPS"/>
    <property type="match status" value="1"/>
</dbReference>
<organism>
    <name type="scientific">Priestia megaterium (strain ATCC 12872 / QMB1551)</name>
    <name type="common">Bacillus megaterium</name>
    <dbReference type="NCBI Taxonomy" id="545693"/>
    <lineage>
        <taxon>Bacteria</taxon>
        <taxon>Bacillati</taxon>
        <taxon>Bacillota</taxon>
        <taxon>Bacilli</taxon>
        <taxon>Bacillales</taxon>
        <taxon>Bacillaceae</taxon>
        <taxon>Priestia</taxon>
    </lineage>
</organism>
<comment type="catalytic activity">
    <reaction>
        <text>1-(2-carboxyphenylamino)-1-deoxy-D-ribulose 5-phosphate + H(+) = (1S,2R)-1-C-(indol-3-yl)glycerol 3-phosphate + CO2 + H2O</text>
        <dbReference type="Rhea" id="RHEA:23476"/>
        <dbReference type="ChEBI" id="CHEBI:15377"/>
        <dbReference type="ChEBI" id="CHEBI:15378"/>
        <dbReference type="ChEBI" id="CHEBI:16526"/>
        <dbReference type="ChEBI" id="CHEBI:58613"/>
        <dbReference type="ChEBI" id="CHEBI:58866"/>
        <dbReference type="EC" id="4.1.1.48"/>
    </reaction>
</comment>
<comment type="pathway">
    <text>Amino-acid biosynthesis; L-tryptophan biosynthesis; L-tryptophan from chorismate: step 4/5.</text>
</comment>
<comment type="similarity">
    <text evidence="1">Belongs to the TrpC family.</text>
</comment>
<evidence type="ECO:0000305" key="1"/>
<accession>P70937</accession>
<accession>D5DRF2</accession>